<organism>
    <name type="scientific">Phalaenopsis aphrodite subsp. formosana</name>
    <name type="common">Moth orchid</name>
    <dbReference type="NCBI Taxonomy" id="308872"/>
    <lineage>
        <taxon>Eukaryota</taxon>
        <taxon>Viridiplantae</taxon>
        <taxon>Streptophyta</taxon>
        <taxon>Embryophyta</taxon>
        <taxon>Tracheophyta</taxon>
        <taxon>Spermatophyta</taxon>
        <taxon>Magnoliopsida</taxon>
        <taxon>Liliopsida</taxon>
        <taxon>Asparagales</taxon>
        <taxon>Orchidaceae</taxon>
        <taxon>Epidendroideae</taxon>
        <taxon>Vandeae</taxon>
        <taxon>Aeridinae</taxon>
        <taxon>Phalaenopsis</taxon>
    </lineage>
</organism>
<dbReference type="EMBL" id="AY916449">
    <property type="protein sequence ID" value="AAW82514.1"/>
    <property type="molecule type" value="Genomic_DNA"/>
</dbReference>
<dbReference type="RefSeq" id="YP_358592.1">
    <property type="nucleotide sequence ID" value="NC_007499.1"/>
</dbReference>
<dbReference type="SMR" id="Q3BAM6"/>
<dbReference type="GeneID" id="3741693"/>
<dbReference type="GO" id="GO:0009535">
    <property type="term" value="C:chloroplast thylakoid membrane"/>
    <property type="evidence" value="ECO:0007669"/>
    <property type="project" value="UniProtKB-SubCell"/>
</dbReference>
<dbReference type="GO" id="GO:0009539">
    <property type="term" value="C:photosystem II reaction center"/>
    <property type="evidence" value="ECO:0007669"/>
    <property type="project" value="InterPro"/>
</dbReference>
<dbReference type="GO" id="GO:0015979">
    <property type="term" value="P:photosynthesis"/>
    <property type="evidence" value="ECO:0007669"/>
    <property type="project" value="UniProtKB-UniRule"/>
</dbReference>
<dbReference type="Gene3D" id="6.10.250.2070">
    <property type="match status" value="1"/>
</dbReference>
<dbReference type="HAMAP" id="MF_01305">
    <property type="entry name" value="PSII_PsbJ"/>
    <property type="match status" value="1"/>
</dbReference>
<dbReference type="InterPro" id="IPR002682">
    <property type="entry name" value="PSII_PsbJ"/>
</dbReference>
<dbReference type="InterPro" id="IPR037267">
    <property type="entry name" value="PSII_PsbJ_sf"/>
</dbReference>
<dbReference type="NCBIfam" id="NF002722">
    <property type="entry name" value="PRK02565.1"/>
    <property type="match status" value="1"/>
</dbReference>
<dbReference type="PANTHER" id="PTHR34812">
    <property type="entry name" value="PHOTOSYSTEM II REACTION CENTER PROTEIN J"/>
    <property type="match status" value="1"/>
</dbReference>
<dbReference type="PANTHER" id="PTHR34812:SF3">
    <property type="entry name" value="PHOTOSYSTEM II REACTION CENTER PROTEIN J"/>
    <property type="match status" value="1"/>
</dbReference>
<dbReference type="Pfam" id="PF01788">
    <property type="entry name" value="PsbJ"/>
    <property type="match status" value="1"/>
</dbReference>
<dbReference type="SUPFAM" id="SSF161021">
    <property type="entry name" value="Photosystem II reaction center protein J, PsbJ"/>
    <property type="match status" value="1"/>
</dbReference>
<reference key="1">
    <citation type="journal article" date="2006" name="Mol. Biol. Evol.">
        <title>The chloroplast genome of Phalaenopsis aphrodite (Orchidaceae): comparative analysis of evolutionary rate with that of grasses and its phylogenetic implications.</title>
        <authorList>
            <person name="Chang C.-C."/>
            <person name="Lin H.-C."/>
            <person name="Lin I.-P."/>
            <person name="Chow T.-Y."/>
            <person name="Chen H.-H."/>
            <person name="Chen W.-H."/>
            <person name="Cheng C.-H."/>
            <person name="Lin C.-Y."/>
            <person name="Liu S.-M."/>
            <person name="Chang C.-C."/>
            <person name="Chaw S.-M."/>
        </authorList>
    </citation>
    <scope>NUCLEOTIDE SEQUENCE [LARGE SCALE GENOMIC DNA]</scope>
    <source>
        <strain>cv. Taisugar TS-97</strain>
    </source>
</reference>
<feature type="chain" id="PRO_0000276108" description="Photosystem II reaction center protein J">
    <location>
        <begin position="1"/>
        <end position="40"/>
    </location>
</feature>
<feature type="transmembrane region" description="Helical" evidence="1">
    <location>
        <begin position="8"/>
        <end position="28"/>
    </location>
</feature>
<sequence length="40" mass="4205">MTDTTGRIPLWLIGTLTGILVIGLIGIFFYGSYSGLGSSL</sequence>
<evidence type="ECO:0000255" key="1">
    <source>
        <dbReference type="HAMAP-Rule" id="MF_01305"/>
    </source>
</evidence>
<geneLocation type="chloroplast"/>
<gene>
    <name evidence="1" type="primary">psbJ</name>
</gene>
<protein>
    <recommendedName>
        <fullName evidence="1">Photosystem II reaction center protein J</fullName>
        <shortName evidence="1">PSII-J</shortName>
    </recommendedName>
</protein>
<accession>Q3BAM6</accession>
<keyword id="KW-0150">Chloroplast</keyword>
<keyword id="KW-0472">Membrane</keyword>
<keyword id="KW-0602">Photosynthesis</keyword>
<keyword id="KW-0604">Photosystem II</keyword>
<keyword id="KW-0934">Plastid</keyword>
<keyword id="KW-0674">Reaction center</keyword>
<keyword id="KW-0793">Thylakoid</keyword>
<keyword id="KW-0812">Transmembrane</keyword>
<keyword id="KW-1133">Transmembrane helix</keyword>
<name>PSBJ_PHAAO</name>
<comment type="function">
    <text evidence="1">One of the components of the core complex of photosystem II (PSII). PSII is a light-driven water:plastoquinone oxidoreductase that uses light energy to abstract electrons from H(2)O, generating O(2) and a proton gradient subsequently used for ATP formation. It consists of a core antenna complex that captures photons, and an electron transfer chain that converts photonic excitation into a charge separation.</text>
</comment>
<comment type="subunit">
    <text evidence="1">PSII is composed of 1 copy each of membrane proteins PsbA, PsbB, PsbC, PsbD, PsbE, PsbF, PsbH, PsbI, PsbJ, PsbK, PsbL, PsbM, PsbT, PsbX, PsbY, PsbZ, Psb30/Ycf12, at least 3 peripheral proteins of the oxygen-evolving complex and a large number of cofactors. It forms dimeric complexes.</text>
</comment>
<comment type="subcellular location">
    <subcellularLocation>
        <location evidence="1">Plastid</location>
        <location evidence="1">Chloroplast thylakoid membrane</location>
        <topology evidence="1">Single-pass membrane protein</topology>
    </subcellularLocation>
</comment>
<comment type="similarity">
    <text evidence="1">Belongs to the PsbJ family.</text>
</comment>
<proteinExistence type="inferred from homology"/>